<name>SYI_BAUCH</name>
<gene>
    <name evidence="1" type="primary">ileS</name>
    <name type="ordered locus">BCI_0556</name>
</gene>
<reference key="1">
    <citation type="journal article" date="2006" name="PLoS Biol.">
        <title>Metabolic complementarity and genomics of the dual bacterial symbiosis of sharpshooters.</title>
        <authorList>
            <person name="Wu D."/>
            <person name="Daugherty S.C."/>
            <person name="Van Aken S.E."/>
            <person name="Pai G.H."/>
            <person name="Watkins K.L."/>
            <person name="Khouri H."/>
            <person name="Tallon L.J."/>
            <person name="Zaborsky J.M."/>
            <person name="Dunbar H.E."/>
            <person name="Tran P.L."/>
            <person name="Moran N.A."/>
            <person name="Eisen J.A."/>
        </authorList>
    </citation>
    <scope>NUCLEOTIDE SEQUENCE [LARGE SCALE GENOMIC DNA]</scope>
</reference>
<organism>
    <name type="scientific">Baumannia cicadellinicola subsp. Homalodisca coagulata</name>
    <dbReference type="NCBI Taxonomy" id="374463"/>
    <lineage>
        <taxon>Bacteria</taxon>
        <taxon>Pseudomonadati</taxon>
        <taxon>Pseudomonadota</taxon>
        <taxon>Gammaproteobacteria</taxon>
        <taxon>Candidatus Palibaumannia</taxon>
    </lineage>
</organism>
<sequence>MIDYKNTLNLPKTQFAMRGNLAIREPIMLKRWHQQDLYQLICQATQGKKTFFLHDGPPYANGSIHIGHSVNKILKDIIIKSKRLMGYCSPYIPGWDCHGLPIELKVEQLIGKPGKKVSASEFIIACRNYASEQVTWQKKDFIRLGVLGDWDNIYRTMDFHTEANIIRTLSKIIENGHVYQGNKPVHWCIDCRSALAEAEVEYYDYTSPSIYVIFAATNTHDVAARFGIPNVLSSISFLVWTTTPWTIPANRAISIHPNLNYQLVKVNQQGFILAADLVTSVLTYLGIQNWTVVKNIKGYVLELLRFSHPFMKFDVPVVLSNHVTINVGTGVVHTSPSHGPDDYLIGREYNLEIVNIVGPDGCYLPGTFSLLDGTSVYQSNQTVISLLKDRGALLHTGTIQHSYPHCWRHKTPLIFRATPQWFISMDKKKLRQQSLKEIKKIQWIPSNSQASITNMVNNRQDWCISRQRIWGVPMSLFVHNHTKKLHPQTSEIMEYVAKQVEKKGIQAWWDLDPIKILGDDIVNYSKINDILDVWFDSGSTHSSVINAQTEFANHEIDMYLEGADQHRGWFMSSLISSTAIKGKAPYKTVITHGFAVDSNGRKMSKSIGNVVSPQQVVDKLGADILRLWVASTNYTDDMTISDEILKRSVDTYRRIRNTARFLLANLNGFEPKQHSVSIDKMIILDQWAIDRAQVAQDEIIAAYNSYEFHSVVQRIMQFCSVEMGSFYLDIIKDRQYTTQYNSIARRSCQTALFHIIEAMVRWIAPIISFTADEIWGFIPGKRSPSVFIEEWYKNLSRLDAEQHMNDTYWNTLLQVRSDVNYLIEQARIKKNIGSSLETQVTLYSEPILAMQLRQLGNELHFVLLTSAVQIADYQEADNNALQSTRIKGLKITLNHATGRKCQRCWHYEQDIGNNTQYPEICGRCVINIAGNGEERKFV</sequence>
<dbReference type="EC" id="6.1.1.5" evidence="1"/>
<dbReference type="EMBL" id="CP000238">
    <property type="protein sequence ID" value="ABF14142.1"/>
    <property type="molecule type" value="Genomic_DNA"/>
</dbReference>
<dbReference type="RefSeq" id="WP_011520718.1">
    <property type="nucleotide sequence ID" value="NC_007984.1"/>
</dbReference>
<dbReference type="SMR" id="Q1LSS9"/>
<dbReference type="STRING" id="374463.BCI_0556"/>
<dbReference type="KEGG" id="bci:BCI_0556"/>
<dbReference type="HOGENOM" id="CLU_001493_7_1_6"/>
<dbReference type="OrthoDB" id="9810365at2"/>
<dbReference type="Proteomes" id="UP000002427">
    <property type="component" value="Chromosome"/>
</dbReference>
<dbReference type="GO" id="GO:0005829">
    <property type="term" value="C:cytosol"/>
    <property type="evidence" value="ECO:0007669"/>
    <property type="project" value="TreeGrafter"/>
</dbReference>
<dbReference type="GO" id="GO:0002161">
    <property type="term" value="F:aminoacyl-tRNA deacylase activity"/>
    <property type="evidence" value="ECO:0007669"/>
    <property type="project" value="InterPro"/>
</dbReference>
<dbReference type="GO" id="GO:0005524">
    <property type="term" value="F:ATP binding"/>
    <property type="evidence" value="ECO:0007669"/>
    <property type="project" value="UniProtKB-UniRule"/>
</dbReference>
<dbReference type="GO" id="GO:0004822">
    <property type="term" value="F:isoleucine-tRNA ligase activity"/>
    <property type="evidence" value="ECO:0007669"/>
    <property type="project" value="UniProtKB-UniRule"/>
</dbReference>
<dbReference type="GO" id="GO:0000049">
    <property type="term" value="F:tRNA binding"/>
    <property type="evidence" value="ECO:0007669"/>
    <property type="project" value="InterPro"/>
</dbReference>
<dbReference type="GO" id="GO:0008270">
    <property type="term" value="F:zinc ion binding"/>
    <property type="evidence" value="ECO:0007669"/>
    <property type="project" value="UniProtKB-UniRule"/>
</dbReference>
<dbReference type="GO" id="GO:0006428">
    <property type="term" value="P:isoleucyl-tRNA aminoacylation"/>
    <property type="evidence" value="ECO:0007669"/>
    <property type="project" value="UniProtKB-UniRule"/>
</dbReference>
<dbReference type="CDD" id="cd07960">
    <property type="entry name" value="Anticodon_Ia_Ile_BEm"/>
    <property type="match status" value="1"/>
</dbReference>
<dbReference type="CDD" id="cd00818">
    <property type="entry name" value="IleRS_core"/>
    <property type="match status" value="1"/>
</dbReference>
<dbReference type="FunFam" id="1.10.730.20:FF:000001">
    <property type="entry name" value="Isoleucine--tRNA ligase"/>
    <property type="match status" value="1"/>
</dbReference>
<dbReference type="FunFam" id="3.40.50.620:FF:000042">
    <property type="entry name" value="Isoleucine--tRNA ligase"/>
    <property type="match status" value="1"/>
</dbReference>
<dbReference type="FunFam" id="3.40.50.620:FF:000048">
    <property type="entry name" value="Isoleucine--tRNA ligase"/>
    <property type="match status" value="1"/>
</dbReference>
<dbReference type="Gene3D" id="1.10.730.20">
    <property type="match status" value="1"/>
</dbReference>
<dbReference type="Gene3D" id="3.40.50.620">
    <property type="entry name" value="HUPs"/>
    <property type="match status" value="2"/>
</dbReference>
<dbReference type="Gene3D" id="3.90.740.10">
    <property type="entry name" value="Valyl/Leucyl/Isoleucyl-tRNA synthetase, editing domain"/>
    <property type="match status" value="1"/>
</dbReference>
<dbReference type="HAMAP" id="MF_02002">
    <property type="entry name" value="Ile_tRNA_synth_type1"/>
    <property type="match status" value="1"/>
</dbReference>
<dbReference type="InterPro" id="IPR001412">
    <property type="entry name" value="aa-tRNA-synth_I_CS"/>
</dbReference>
<dbReference type="InterPro" id="IPR002300">
    <property type="entry name" value="aa-tRNA-synth_Ia"/>
</dbReference>
<dbReference type="InterPro" id="IPR033708">
    <property type="entry name" value="Anticodon_Ile_BEm"/>
</dbReference>
<dbReference type="InterPro" id="IPR002301">
    <property type="entry name" value="Ile-tRNA-ligase"/>
</dbReference>
<dbReference type="InterPro" id="IPR023585">
    <property type="entry name" value="Ile-tRNA-ligase_type1"/>
</dbReference>
<dbReference type="InterPro" id="IPR050081">
    <property type="entry name" value="Ile-tRNA_ligase"/>
</dbReference>
<dbReference type="InterPro" id="IPR013155">
    <property type="entry name" value="M/V/L/I-tRNA-synth_anticd-bd"/>
</dbReference>
<dbReference type="InterPro" id="IPR014729">
    <property type="entry name" value="Rossmann-like_a/b/a_fold"/>
</dbReference>
<dbReference type="InterPro" id="IPR009080">
    <property type="entry name" value="tRNAsynth_Ia_anticodon-bd"/>
</dbReference>
<dbReference type="InterPro" id="IPR009008">
    <property type="entry name" value="Val/Leu/Ile-tRNA-synth_edit"/>
</dbReference>
<dbReference type="InterPro" id="IPR010663">
    <property type="entry name" value="Znf_FPG/IleRS"/>
</dbReference>
<dbReference type="NCBIfam" id="TIGR00392">
    <property type="entry name" value="ileS"/>
    <property type="match status" value="1"/>
</dbReference>
<dbReference type="PANTHER" id="PTHR42765:SF1">
    <property type="entry name" value="ISOLEUCINE--TRNA LIGASE, MITOCHONDRIAL"/>
    <property type="match status" value="1"/>
</dbReference>
<dbReference type="PANTHER" id="PTHR42765">
    <property type="entry name" value="SOLEUCYL-TRNA SYNTHETASE"/>
    <property type="match status" value="1"/>
</dbReference>
<dbReference type="Pfam" id="PF08264">
    <property type="entry name" value="Anticodon_1"/>
    <property type="match status" value="1"/>
</dbReference>
<dbReference type="Pfam" id="PF00133">
    <property type="entry name" value="tRNA-synt_1"/>
    <property type="match status" value="1"/>
</dbReference>
<dbReference type="Pfam" id="PF06827">
    <property type="entry name" value="zf-FPG_IleRS"/>
    <property type="match status" value="1"/>
</dbReference>
<dbReference type="PRINTS" id="PR00984">
    <property type="entry name" value="TRNASYNTHILE"/>
</dbReference>
<dbReference type="SUPFAM" id="SSF47323">
    <property type="entry name" value="Anticodon-binding domain of a subclass of class I aminoacyl-tRNA synthetases"/>
    <property type="match status" value="1"/>
</dbReference>
<dbReference type="SUPFAM" id="SSF52374">
    <property type="entry name" value="Nucleotidylyl transferase"/>
    <property type="match status" value="1"/>
</dbReference>
<dbReference type="SUPFAM" id="SSF50677">
    <property type="entry name" value="ValRS/IleRS/LeuRS editing domain"/>
    <property type="match status" value="1"/>
</dbReference>
<dbReference type="PROSITE" id="PS00178">
    <property type="entry name" value="AA_TRNA_LIGASE_I"/>
    <property type="match status" value="1"/>
</dbReference>
<protein>
    <recommendedName>
        <fullName evidence="1">Isoleucine--tRNA ligase</fullName>
        <ecNumber evidence="1">6.1.1.5</ecNumber>
    </recommendedName>
    <alternativeName>
        <fullName evidence="1">Isoleucyl-tRNA synthetase</fullName>
        <shortName evidence="1">IleRS</shortName>
    </alternativeName>
</protein>
<keyword id="KW-0030">Aminoacyl-tRNA synthetase</keyword>
<keyword id="KW-0067">ATP-binding</keyword>
<keyword id="KW-0963">Cytoplasm</keyword>
<keyword id="KW-0436">Ligase</keyword>
<keyword id="KW-0479">Metal-binding</keyword>
<keyword id="KW-0547">Nucleotide-binding</keyword>
<keyword id="KW-0648">Protein biosynthesis</keyword>
<keyword id="KW-1185">Reference proteome</keyword>
<keyword id="KW-0862">Zinc</keyword>
<evidence type="ECO:0000255" key="1">
    <source>
        <dbReference type="HAMAP-Rule" id="MF_02002"/>
    </source>
</evidence>
<proteinExistence type="inferred from homology"/>
<accession>Q1LSS9</accession>
<feature type="chain" id="PRO_1000022042" description="Isoleucine--tRNA ligase">
    <location>
        <begin position="1"/>
        <end position="938"/>
    </location>
</feature>
<feature type="short sequence motif" description="'HIGH' region">
    <location>
        <begin position="58"/>
        <end position="68"/>
    </location>
</feature>
<feature type="short sequence motif" description="'KMSKS' region">
    <location>
        <begin position="602"/>
        <end position="606"/>
    </location>
</feature>
<feature type="binding site" evidence="1">
    <location>
        <position position="561"/>
    </location>
    <ligand>
        <name>L-isoleucyl-5'-AMP</name>
        <dbReference type="ChEBI" id="CHEBI:178002"/>
    </ligand>
</feature>
<feature type="binding site" evidence="1">
    <location>
        <position position="605"/>
    </location>
    <ligand>
        <name>ATP</name>
        <dbReference type="ChEBI" id="CHEBI:30616"/>
    </ligand>
</feature>
<feature type="binding site" evidence="1">
    <location>
        <position position="901"/>
    </location>
    <ligand>
        <name>Zn(2+)</name>
        <dbReference type="ChEBI" id="CHEBI:29105"/>
    </ligand>
</feature>
<feature type="binding site" evidence="1">
    <location>
        <position position="904"/>
    </location>
    <ligand>
        <name>Zn(2+)</name>
        <dbReference type="ChEBI" id="CHEBI:29105"/>
    </ligand>
</feature>
<feature type="binding site" evidence="1">
    <location>
        <position position="921"/>
    </location>
    <ligand>
        <name>Zn(2+)</name>
        <dbReference type="ChEBI" id="CHEBI:29105"/>
    </ligand>
</feature>
<feature type="binding site" evidence="1">
    <location>
        <position position="924"/>
    </location>
    <ligand>
        <name>Zn(2+)</name>
        <dbReference type="ChEBI" id="CHEBI:29105"/>
    </ligand>
</feature>
<comment type="function">
    <text evidence="1">Catalyzes the attachment of isoleucine to tRNA(Ile). As IleRS can inadvertently accommodate and process structurally similar amino acids such as valine, to avoid such errors it has two additional distinct tRNA(Ile)-dependent editing activities. One activity is designated as 'pretransfer' editing and involves the hydrolysis of activated Val-AMP. The other activity is designated 'posttransfer' editing and involves deacylation of mischarged Val-tRNA(Ile).</text>
</comment>
<comment type="catalytic activity">
    <reaction evidence="1">
        <text>tRNA(Ile) + L-isoleucine + ATP = L-isoleucyl-tRNA(Ile) + AMP + diphosphate</text>
        <dbReference type="Rhea" id="RHEA:11060"/>
        <dbReference type="Rhea" id="RHEA-COMP:9666"/>
        <dbReference type="Rhea" id="RHEA-COMP:9695"/>
        <dbReference type="ChEBI" id="CHEBI:30616"/>
        <dbReference type="ChEBI" id="CHEBI:33019"/>
        <dbReference type="ChEBI" id="CHEBI:58045"/>
        <dbReference type="ChEBI" id="CHEBI:78442"/>
        <dbReference type="ChEBI" id="CHEBI:78528"/>
        <dbReference type="ChEBI" id="CHEBI:456215"/>
        <dbReference type="EC" id="6.1.1.5"/>
    </reaction>
</comment>
<comment type="cofactor">
    <cofactor evidence="1">
        <name>Zn(2+)</name>
        <dbReference type="ChEBI" id="CHEBI:29105"/>
    </cofactor>
    <text evidence="1">Binds 1 zinc ion per subunit.</text>
</comment>
<comment type="subunit">
    <text evidence="1">Monomer.</text>
</comment>
<comment type="subcellular location">
    <subcellularLocation>
        <location evidence="1">Cytoplasm</location>
    </subcellularLocation>
</comment>
<comment type="domain">
    <text evidence="1">IleRS has two distinct active sites: one for aminoacylation and one for editing. The misactivated valine is translocated from the active site to the editing site, which sterically excludes the correctly activated isoleucine. The single editing site contains two valyl binding pockets, one specific for each substrate (Val-AMP or Val-tRNA(Ile)).</text>
</comment>
<comment type="similarity">
    <text evidence="1">Belongs to the class-I aminoacyl-tRNA synthetase family. IleS type 1 subfamily.</text>
</comment>